<proteinExistence type="evidence at transcript level"/>
<feature type="signal peptide" evidence="1">
    <location>
        <begin position="1"/>
        <end position="40"/>
    </location>
</feature>
<feature type="chain" id="PRO_0000031686" description="Sulfate-binding protein">
    <location>
        <begin position="41"/>
        <end position="352"/>
    </location>
</feature>
<feature type="sequence conflict" description="In Ref. 2; BAA18651." evidence="2" ref="2">
    <original>R</original>
    <variation>A</variation>
    <location>
        <position position="277"/>
    </location>
</feature>
<sequence length="352" mass="38128">MARSAFGWGFSVIAVLMVGSITACNTTTTTEPGQGENASQAPANLTLVSYAVTRDAFEKIIPKFTEEWKSKTGQDVTFEQSYGGSGSQTRAVVDGLEADIVALALSSDVQKIESAGLIQPGWEQEAPNGSIVTNSVIAFVTKASDNIKVEKWADLANPEVKVITANPKTSGGARWNFLGIWGSVTKTGGTEEQAFDFAGKVLANAPVLPKDARESTDVFYKQGQGNVLLNYENEVLLAKQKGENQPYIIPQDFNVSISGPVAVVDTTVDKKGTREVRDAFVQYLFTPEAQQIFAETGFRPVNEEVLAKFASQYPKVENLATIEEFGGWKKAQAEFFDEGGIFDKVITKIGRQ</sequence>
<protein>
    <recommendedName>
        <fullName>Sulfate-binding protein</fullName>
    </recommendedName>
</protein>
<accession>Q01903</accession>
<accession>P74545</accession>
<dbReference type="EMBL" id="X67911">
    <property type="protein sequence ID" value="CAA48109.1"/>
    <property type="molecule type" value="Genomic_DNA"/>
</dbReference>
<dbReference type="EMBL" id="BA000022">
    <property type="protein sequence ID" value="BAA18651.1"/>
    <property type="molecule type" value="Genomic_DNA"/>
</dbReference>
<dbReference type="PIR" id="S76739">
    <property type="entry name" value="S76739"/>
</dbReference>
<dbReference type="SMR" id="Q01903"/>
<dbReference type="STRING" id="1148.gene:10500417"/>
<dbReference type="PaxDb" id="1148-1653740"/>
<dbReference type="EnsemblBacteria" id="BAA18651">
    <property type="protein sequence ID" value="BAA18651"/>
    <property type="gene ID" value="BAA18651"/>
</dbReference>
<dbReference type="KEGG" id="syn:slr1452"/>
<dbReference type="eggNOG" id="COG1613">
    <property type="taxonomic scope" value="Bacteria"/>
</dbReference>
<dbReference type="InParanoid" id="Q01903"/>
<dbReference type="PhylomeDB" id="Q01903"/>
<dbReference type="Proteomes" id="UP000001425">
    <property type="component" value="Chromosome"/>
</dbReference>
<dbReference type="GO" id="GO:0042597">
    <property type="term" value="C:periplasmic space"/>
    <property type="evidence" value="ECO:0007669"/>
    <property type="project" value="UniProtKB-SubCell"/>
</dbReference>
<dbReference type="GO" id="GO:0140104">
    <property type="term" value="F:molecular carrier activity"/>
    <property type="evidence" value="ECO:0007669"/>
    <property type="project" value="InterPro"/>
</dbReference>
<dbReference type="GO" id="GO:0030973">
    <property type="term" value="F:molybdate ion binding"/>
    <property type="evidence" value="ECO:0000318"/>
    <property type="project" value="GO_Central"/>
</dbReference>
<dbReference type="GO" id="GO:1901681">
    <property type="term" value="F:sulfur compound binding"/>
    <property type="evidence" value="ECO:0007669"/>
    <property type="project" value="InterPro"/>
</dbReference>
<dbReference type="GO" id="GO:0015689">
    <property type="term" value="P:molybdate ion transport"/>
    <property type="evidence" value="ECO:0000318"/>
    <property type="project" value="GO_Central"/>
</dbReference>
<dbReference type="GO" id="GO:1902358">
    <property type="term" value="P:sulfate transmembrane transport"/>
    <property type="evidence" value="ECO:0007669"/>
    <property type="project" value="InterPro"/>
</dbReference>
<dbReference type="CDD" id="cd01005">
    <property type="entry name" value="PBP2_CysP"/>
    <property type="match status" value="1"/>
</dbReference>
<dbReference type="Gene3D" id="3.40.190.10">
    <property type="entry name" value="Periplasmic binding protein-like II"/>
    <property type="match status" value="2"/>
</dbReference>
<dbReference type="InterPro" id="IPR000957">
    <property type="entry name" value="Sulphate/thiosulphate-bd_CS"/>
</dbReference>
<dbReference type="InterPro" id="IPR034408">
    <property type="entry name" value="Sulphate/thiosulphate_BS"/>
</dbReference>
<dbReference type="InterPro" id="IPR005669">
    <property type="entry name" value="Thiosulph/SO4-bd"/>
</dbReference>
<dbReference type="NCBIfam" id="TIGR00971">
    <property type="entry name" value="3a0106s03"/>
    <property type="match status" value="1"/>
</dbReference>
<dbReference type="PANTHER" id="PTHR30368">
    <property type="entry name" value="SULFATE-BINDING PROTEIN"/>
    <property type="match status" value="1"/>
</dbReference>
<dbReference type="PANTHER" id="PTHR30368:SF2">
    <property type="entry name" value="SULFATE-BINDING PROTEIN"/>
    <property type="match status" value="1"/>
</dbReference>
<dbReference type="Pfam" id="PF13531">
    <property type="entry name" value="SBP_bac_11"/>
    <property type="match status" value="1"/>
</dbReference>
<dbReference type="SUPFAM" id="SSF53850">
    <property type="entry name" value="Periplasmic binding protein-like II"/>
    <property type="match status" value="1"/>
</dbReference>
<dbReference type="PROSITE" id="PS00401">
    <property type="entry name" value="PROK_SULFATE_BIND_1"/>
    <property type="match status" value="1"/>
</dbReference>
<dbReference type="PROSITE" id="PS00757">
    <property type="entry name" value="PROK_SULFATE_BIND_2"/>
    <property type="match status" value="1"/>
</dbReference>
<evidence type="ECO:0000255" key="1"/>
<evidence type="ECO:0000305" key="2"/>
<gene>
    <name type="primary">sbpA</name>
    <name type="ordered locus">slr1452</name>
</gene>
<reference key="1">
    <citation type="journal article" date="1993" name="Plant Mol. Biol.">
        <title>Nucleotide sequence and homology comparison of two genes of the sulfate transport operon from the cyanobacterium Synechocystis sp. PCC 6803.</title>
        <authorList>
            <person name="Kohn C."/>
            <person name="Schumann J."/>
        </authorList>
    </citation>
    <scope>NUCLEOTIDE SEQUENCE [GENOMIC DNA]</scope>
</reference>
<reference key="2">
    <citation type="journal article" date="1996" name="DNA Res.">
        <title>Sequence analysis of the genome of the unicellular cyanobacterium Synechocystis sp. strain PCC6803. II. Sequence determination of the entire genome and assignment of potential protein-coding regions.</title>
        <authorList>
            <person name="Kaneko T."/>
            <person name="Sato S."/>
            <person name="Kotani H."/>
            <person name="Tanaka A."/>
            <person name="Asamizu E."/>
            <person name="Nakamura Y."/>
            <person name="Miyajima N."/>
            <person name="Hirosawa M."/>
            <person name="Sugiura M."/>
            <person name="Sasamoto S."/>
            <person name="Kimura T."/>
            <person name="Hosouchi T."/>
            <person name="Matsuno A."/>
            <person name="Muraki A."/>
            <person name="Nakazaki N."/>
            <person name="Naruo K."/>
            <person name="Okumura S."/>
            <person name="Shimpo S."/>
            <person name="Takeuchi C."/>
            <person name="Wada T."/>
            <person name="Watanabe A."/>
            <person name="Yamada M."/>
            <person name="Yasuda M."/>
            <person name="Tabata S."/>
        </authorList>
    </citation>
    <scope>NUCLEOTIDE SEQUENCE [LARGE SCALE GENOMIC DNA]</scope>
    <source>
        <strain>ATCC 27184 / PCC 6803 / Kazusa</strain>
    </source>
</reference>
<keyword id="KW-0574">Periplasm</keyword>
<keyword id="KW-1185">Reference proteome</keyword>
<keyword id="KW-0732">Signal</keyword>
<keyword id="KW-0346">Stress response</keyword>
<keyword id="KW-0764">Sulfate transport</keyword>
<keyword id="KW-0813">Transport</keyword>
<organism>
    <name type="scientific">Synechocystis sp. (strain ATCC 27184 / PCC 6803 / Kazusa)</name>
    <dbReference type="NCBI Taxonomy" id="1111708"/>
    <lineage>
        <taxon>Bacteria</taxon>
        <taxon>Bacillati</taxon>
        <taxon>Cyanobacteriota</taxon>
        <taxon>Cyanophyceae</taxon>
        <taxon>Synechococcales</taxon>
        <taxon>Merismopediaceae</taxon>
        <taxon>Synechocystis</taxon>
    </lineage>
</organism>
<comment type="function">
    <text>This protein specifically binds sulfate and is involved in its transmembrane transport.</text>
</comment>
<comment type="subcellular location">
    <subcellularLocation>
        <location>Periplasm</location>
    </subcellularLocation>
</comment>
<comment type="induction">
    <text>By sulfur deprivation.</text>
</comment>
<comment type="similarity">
    <text evidence="2">Belongs to the prokaryotic sulfate-binding protein family.</text>
</comment>
<name>SUBI_SYNY3</name>